<protein>
    <recommendedName>
        <fullName evidence="1">Chromosomal replication initiator protein DnaA</fullName>
    </recommendedName>
</protein>
<feature type="chain" id="PRO_1000048601" description="Chromosomal replication initiator protein DnaA">
    <location>
        <begin position="1"/>
        <end position="474"/>
    </location>
</feature>
<feature type="region of interest" description="Domain I, interacts with DnaA modulators" evidence="1">
    <location>
        <begin position="1"/>
        <end position="91"/>
    </location>
</feature>
<feature type="region of interest" description="Disordered" evidence="2">
    <location>
        <begin position="89"/>
        <end position="138"/>
    </location>
</feature>
<feature type="region of interest" description="Domain II" evidence="1">
    <location>
        <begin position="91"/>
        <end position="136"/>
    </location>
</feature>
<feature type="region of interest" description="Domain III, AAA+ region" evidence="1">
    <location>
        <begin position="137"/>
        <end position="354"/>
    </location>
</feature>
<feature type="region of interest" description="Domain IV, binds dsDNA" evidence="1">
    <location>
        <begin position="355"/>
        <end position="474"/>
    </location>
</feature>
<feature type="compositionally biased region" description="Low complexity" evidence="2">
    <location>
        <begin position="96"/>
        <end position="113"/>
    </location>
</feature>
<feature type="binding site" evidence="1">
    <location>
        <position position="182"/>
    </location>
    <ligand>
        <name>ATP</name>
        <dbReference type="ChEBI" id="CHEBI:30616"/>
    </ligand>
</feature>
<feature type="binding site" evidence="1">
    <location>
        <position position="184"/>
    </location>
    <ligand>
        <name>ATP</name>
        <dbReference type="ChEBI" id="CHEBI:30616"/>
    </ligand>
</feature>
<feature type="binding site" evidence="1">
    <location>
        <position position="185"/>
    </location>
    <ligand>
        <name>ATP</name>
        <dbReference type="ChEBI" id="CHEBI:30616"/>
    </ligand>
</feature>
<feature type="binding site" evidence="1">
    <location>
        <position position="186"/>
    </location>
    <ligand>
        <name>ATP</name>
        <dbReference type="ChEBI" id="CHEBI:30616"/>
    </ligand>
</feature>
<accession>Q0VT30</accession>
<name>DNAA_ALCBS</name>
<reference key="1">
    <citation type="journal article" date="2006" name="Nat. Biotechnol.">
        <title>Genome sequence of the ubiquitous hydrocarbon-degrading marine bacterium Alcanivorax borkumensis.</title>
        <authorList>
            <person name="Schneiker S."/>
            <person name="Martins dos Santos V.A.P."/>
            <person name="Bartels D."/>
            <person name="Bekel T."/>
            <person name="Brecht M."/>
            <person name="Buhrmester J."/>
            <person name="Chernikova T.N."/>
            <person name="Denaro R."/>
            <person name="Ferrer M."/>
            <person name="Gertler C."/>
            <person name="Goesmann A."/>
            <person name="Golyshina O.V."/>
            <person name="Kaminski F."/>
            <person name="Khachane A.N."/>
            <person name="Lang S."/>
            <person name="Linke B."/>
            <person name="McHardy A.C."/>
            <person name="Meyer F."/>
            <person name="Nechitaylo T."/>
            <person name="Puehler A."/>
            <person name="Regenhardt D."/>
            <person name="Rupp O."/>
            <person name="Sabirova J.S."/>
            <person name="Selbitschka W."/>
            <person name="Yakimov M.M."/>
            <person name="Timmis K.N."/>
            <person name="Vorhoelter F.-J."/>
            <person name="Weidner S."/>
            <person name="Kaiser O."/>
            <person name="Golyshin P.N."/>
        </authorList>
    </citation>
    <scope>NUCLEOTIDE SEQUENCE [LARGE SCALE GENOMIC DNA]</scope>
    <source>
        <strain>ATCC 700651 / DSM 11573 / NCIMB 13689 / SK2</strain>
    </source>
</reference>
<keyword id="KW-0067">ATP-binding</keyword>
<keyword id="KW-0963">Cytoplasm</keyword>
<keyword id="KW-0235">DNA replication</keyword>
<keyword id="KW-0238">DNA-binding</keyword>
<keyword id="KW-0446">Lipid-binding</keyword>
<keyword id="KW-0547">Nucleotide-binding</keyword>
<keyword id="KW-1185">Reference proteome</keyword>
<sequence length="474" mass="53133">MSEELWQRCLTRLEDELPSQQFNMWIRPLQVAASADGAELTLFAPNRFVVDWVRDKYLDRISEVLGEMQSGPLPQLRLEVGSTRASTPAASYFNGSSSSSSNGPITTPAAAPAPRQPESDSRPQPTSLGGARKHRSNLNTGFTFSTFVEGKSNRMAAAAAQQVAENPASHGYNPLLLYGGVGLGKTHLMHAVGNELLRRNPNAKVVYLHSERFVADMISALRNKTINEFKRFYRSVDALLIDDIQFFAGKEQSQEEFFHTFNALLENGQQIILTCDKFPKEVDGLEERLKSRFGWGLSQPMEPPELETRVAILKKKAEEAKVDLPNDAAFFIAQRIRSNVRELEGALRRVIAHVRFTGAQIDIGLIKEALKDLIALQARQISIDNIQRIVAEYYKIKINDLLSPRRTRSVARPRQVAMALSKELTSHSLPEIGENFGGRDHTTVLHACRKVLELRESNPEIEEDYLNLLRTLTS</sequence>
<dbReference type="EMBL" id="AM286690">
    <property type="protein sequence ID" value="CAL15449.1"/>
    <property type="molecule type" value="Genomic_DNA"/>
</dbReference>
<dbReference type="RefSeq" id="WP_011587299.1">
    <property type="nucleotide sequence ID" value="NC_008260.1"/>
</dbReference>
<dbReference type="SMR" id="Q0VT30"/>
<dbReference type="STRING" id="393595.ABO_0001"/>
<dbReference type="KEGG" id="abo:ABO_0001"/>
<dbReference type="eggNOG" id="COG0593">
    <property type="taxonomic scope" value="Bacteria"/>
</dbReference>
<dbReference type="HOGENOM" id="CLU_026910_0_1_6"/>
<dbReference type="OrthoDB" id="9807019at2"/>
<dbReference type="Proteomes" id="UP000008871">
    <property type="component" value="Chromosome"/>
</dbReference>
<dbReference type="GO" id="GO:0005737">
    <property type="term" value="C:cytoplasm"/>
    <property type="evidence" value="ECO:0007669"/>
    <property type="project" value="UniProtKB-SubCell"/>
</dbReference>
<dbReference type="GO" id="GO:0005886">
    <property type="term" value="C:plasma membrane"/>
    <property type="evidence" value="ECO:0007669"/>
    <property type="project" value="TreeGrafter"/>
</dbReference>
<dbReference type="GO" id="GO:0005524">
    <property type="term" value="F:ATP binding"/>
    <property type="evidence" value="ECO:0007669"/>
    <property type="project" value="UniProtKB-UniRule"/>
</dbReference>
<dbReference type="GO" id="GO:0016887">
    <property type="term" value="F:ATP hydrolysis activity"/>
    <property type="evidence" value="ECO:0007669"/>
    <property type="project" value="InterPro"/>
</dbReference>
<dbReference type="GO" id="GO:0003688">
    <property type="term" value="F:DNA replication origin binding"/>
    <property type="evidence" value="ECO:0007669"/>
    <property type="project" value="UniProtKB-UniRule"/>
</dbReference>
<dbReference type="GO" id="GO:0008289">
    <property type="term" value="F:lipid binding"/>
    <property type="evidence" value="ECO:0007669"/>
    <property type="project" value="UniProtKB-KW"/>
</dbReference>
<dbReference type="GO" id="GO:0006270">
    <property type="term" value="P:DNA replication initiation"/>
    <property type="evidence" value="ECO:0007669"/>
    <property type="project" value="UniProtKB-UniRule"/>
</dbReference>
<dbReference type="GO" id="GO:0006275">
    <property type="term" value="P:regulation of DNA replication"/>
    <property type="evidence" value="ECO:0007669"/>
    <property type="project" value="UniProtKB-UniRule"/>
</dbReference>
<dbReference type="CDD" id="cd00009">
    <property type="entry name" value="AAA"/>
    <property type="match status" value="1"/>
</dbReference>
<dbReference type="CDD" id="cd06571">
    <property type="entry name" value="Bac_DnaA_C"/>
    <property type="match status" value="1"/>
</dbReference>
<dbReference type="FunFam" id="1.10.1750.10:FF:000001">
    <property type="entry name" value="Chromosomal replication initiator protein DnaA"/>
    <property type="match status" value="1"/>
</dbReference>
<dbReference type="FunFam" id="1.10.8.60:FF:000003">
    <property type="entry name" value="Chromosomal replication initiator protein DnaA"/>
    <property type="match status" value="1"/>
</dbReference>
<dbReference type="FunFam" id="3.40.50.300:FF:000103">
    <property type="entry name" value="Chromosomal replication initiator protein DnaA"/>
    <property type="match status" value="1"/>
</dbReference>
<dbReference type="Gene3D" id="1.10.1750.10">
    <property type="match status" value="1"/>
</dbReference>
<dbReference type="Gene3D" id="1.10.8.60">
    <property type="match status" value="1"/>
</dbReference>
<dbReference type="Gene3D" id="3.30.300.180">
    <property type="match status" value="1"/>
</dbReference>
<dbReference type="Gene3D" id="3.40.50.300">
    <property type="entry name" value="P-loop containing nucleotide triphosphate hydrolases"/>
    <property type="match status" value="1"/>
</dbReference>
<dbReference type="HAMAP" id="MF_00377">
    <property type="entry name" value="DnaA_bact"/>
    <property type="match status" value="1"/>
</dbReference>
<dbReference type="InterPro" id="IPR003593">
    <property type="entry name" value="AAA+_ATPase"/>
</dbReference>
<dbReference type="InterPro" id="IPR001957">
    <property type="entry name" value="Chromosome_initiator_DnaA"/>
</dbReference>
<dbReference type="InterPro" id="IPR020591">
    <property type="entry name" value="Chromosome_initiator_DnaA-like"/>
</dbReference>
<dbReference type="InterPro" id="IPR018312">
    <property type="entry name" value="Chromosome_initiator_DnaA_CS"/>
</dbReference>
<dbReference type="InterPro" id="IPR013159">
    <property type="entry name" value="DnaA_C"/>
</dbReference>
<dbReference type="InterPro" id="IPR013317">
    <property type="entry name" value="DnaA_dom"/>
</dbReference>
<dbReference type="InterPro" id="IPR024633">
    <property type="entry name" value="DnaA_N_dom"/>
</dbReference>
<dbReference type="InterPro" id="IPR038454">
    <property type="entry name" value="DnaA_N_sf"/>
</dbReference>
<dbReference type="InterPro" id="IPR027417">
    <property type="entry name" value="P-loop_NTPase"/>
</dbReference>
<dbReference type="InterPro" id="IPR010921">
    <property type="entry name" value="Trp_repressor/repl_initiator"/>
</dbReference>
<dbReference type="NCBIfam" id="TIGR00362">
    <property type="entry name" value="DnaA"/>
    <property type="match status" value="1"/>
</dbReference>
<dbReference type="PANTHER" id="PTHR30050">
    <property type="entry name" value="CHROMOSOMAL REPLICATION INITIATOR PROTEIN DNAA"/>
    <property type="match status" value="1"/>
</dbReference>
<dbReference type="PANTHER" id="PTHR30050:SF2">
    <property type="entry name" value="CHROMOSOMAL REPLICATION INITIATOR PROTEIN DNAA"/>
    <property type="match status" value="1"/>
</dbReference>
<dbReference type="Pfam" id="PF00308">
    <property type="entry name" value="Bac_DnaA"/>
    <property type="match status" value="1"/>
</dbReference>
<dbReference type="Pfam" id="PF08299">
    <property type="entry name" value="Bac_DnaA_C"/>
    <property type="match status" value="1"/>
</dbReference>
<dbReference type="Pfam" id="PF11638">
    <property type="entry name" value="DnaA_N"/>
    <property type="match status" value="1"/>
</dbReference>
<dbReference type="PRINTS" id="PR00051">
    <property type="entry name" value="DNAA"/>
</dbReference>
<dbReference type="SMART" id="SM00382">
    <property type="entry name" value="AAA"/>
    <property type="match status" value="1"/>
</dbReference>
<dbReference type="SMART" id="SM00760">
    <property type="entry name" value="Bac_DnaA_C"/>
    <property type="match status" value="1"/>
</dbReference>
<dbReference type="SUPFAM" id="SSF52540">
    <property type="entry name" value="P-loop containing nucleoside triphosphate hydrolases"/>
    <property type="match status" value="1"/>
</dbReference>
<dbReference type="SUPFAM" id="SSF48295">
    <property type="entry name" value="TrpR-like"/>
    <property type="match status" value="1"/>
</dbReference>
<dbReference type="PROSITE" id="PS01008">
    <property type="entry name" value="DNAA"/>
    <property type="match status" value="1"/>
</dbReference>
<evidence type="ECO:0000255" key="1">
    <source>
        <dbReference type="HAMAP-Rule" id="MF_00377"/>
    </source>
</evidence>
<evidence type="ECO:0000256" key="2">
    <source>
        <dbReference type="SAM" id="MobiDB-lite"/>
    </source>
</evidence>
<organism>
    <name type="scientific">Alcanivorax borkumensis (strain ATCC 700651 / DSM 11573 / NCIMB 13689 / SK2)</name>
    <dbReference type="NCBI Taxonomy" id="393595"/>
    <lineage>
        <taxon>Bacteria</taxon>
        <taxon>Pseudomonadati</taxon>
        <taxon>Pseudomonadota</taxon>
        <taxon>Gammaproteobacteria</taxon>
        <taxon>Oceanospirillales</taxon>
        <taxon>Alcanivoracaceae</taxon>
        <taxon>Alcanivorax</taxon>
    </lineage>
</organism>
<proteinExistence type="inferred from homology"/>
<comment type="function">
    <text evidence="1">Plays an essential role in the initiation and regulation of chromosomal replication. ATP-DnaA binds to the origin of replication (oriC) to initiate formation of the DNA replication initiation complex once per cell cycle. Binds the DnaA box (a 9 base pair repeat at the origin) and separates the double-stranded (ds)DNA. Forms a right-handed helical filament on oriC DNA; dsDNA binds to the exterior of the filament while single-stranded (ss)DNA is stabiized in the filament's interior. The ATP-DnaA-oriC complex binds and stabilizes one strand of the AT-rich DNA unwinding element (DUE), permitting loading of DNA polymerase. After initiation quickly degrades to an ADP-DnaA complex that is not apt for DNA replication. Binds acidic phospholipids.</text>
</comment>
<comment type="subunit">
    <text evidence="1">Oligomerizes as a right-handed, spiral filament on DNA at oriC.</text>
</comment>
<comment type="subcellular location">
    <subcellularLocation>
        <location evidence="1">Cytoplasm</location>
    </subcellularLocation>
</comment>
<comment type="domain">
    <text evidence="1">Domain I is involved in oligomerization and binding regulators, domain II is flexibile and of varying length in different bacteria, domain III forms the AAA+ region, while domain IV binds dsDNA.</text>
</comment>
<comment type="similarity">
    <text evidence="1">Belongs to the DnaA family.</text>
</comment>
<gene>
    <name evidence="1" type="primary">dnaA</name>
    <name type="ordered locus">ABO_0001</name>
</gene>